<gene>
    <name evidence="1" type="primary">rpmJ2</name>
    <name type="ordered locus">SCO0569</name>
    <name type="ORF">SC5G5.01c</name>
    <name type="ORF">SC8B3.03c</name>
</gene>
<protein>
    <recommendedName>
        <fullName evidence="1">Large ribosomal subunit protein bL36B</fullName>
    </recommendedName>
    <alternativeName>
        <fullName evidence="2">50S ribosomal protein L36 2</fullName>
    </alternativeName>
</protein>
<proteinExistence type="inferred from homology"/>
<evidence type="ECO:0000255" key="1">
    <source>
        <dbReference type="HAMAP-Rule" id="MF_00251"/>
    </source>
</evidence>
<evidence type="ECO:0000305" key="2"/>
<feature type="chain" id="PRO_0000126267" description="Large ribosomal subunit protein bL36B">
    <location>
        <begin position="1"/>
        <end position="40"/>
    </location>
</feature>
<reference key="1">
    <citation type="journal article" date="2002" name="Nature">
        <title>Complete genome sequence of the model actinomycete Streptomyces coelicolor A3(2).</title>
        <authorList>
            <person name="Bentley S.D."/>
            <person name="Chater K.F."/>
            <person name="Cerdeno-Tarraga A.-M."/>
            <person name="Challis G.L."/>
            <person name="Thomson N.R."/>
            <person name="James K.D."/>
            <person name="Harris D.E."/>
            <person name="Quail M.A."/>
            <person name="Kieser H."/>
            <person name="Harper D."/>
            <person name="Bateman A."/>
            <person name="Brown S."/>
            <person name="Chandra G."/>
            <person name="Chen C.W."/>
            <person name="Collins M."/>
            <person name="Cronin A."/>
            <person name="Fraser A."/>
            <person name="Goble A."/>
            <person name="Hidalgo J."/>
            <person name="Hornsby T."/>
            <person name="Howarth S."/>
            <person name="Huang C.-H."/>
            <person name="Kieser T."/>
            <person name="Larke L."/>
            <person name="Murphy L.D."/>
            <person name="Oliver K."/>
            <person name="O'Neil S."/>
            <person name="Rabbinowitsch E."/>
            <person name="Rajandream M.A."/>
            <person name="Rutherford K.M."/>
            <person name="Rutter S."/>
            <person name="Seeger K."/>
            <person name="Saunders D."/>
            <person name="Sharp S."/>
            <person name="Squares R."/>
            <person name="Squares S."/>
            <person name="Taylor K."/>
            <person name="Warren T."/>
            <person name="Wietzorrek A."/>
            <person name="Woodward J.R."/>
            <person name="Barrell B.G."/>
            <person name="Parkhill J."/>
            <person name="Hopwood D.A."/>
        </authorList>
    </citation>
    <scope>NUCLEOTIDE SEQUENCE [LARGE SCALE GENOMIC DNA]</scope>
    <source>
        <strain>ATCC BAA-471 / A3(2) / M145</strain>
    </source>
</reference>
<organism>
    <name type="scientific">Streptomyces coelicolor (strain ATCC BAA-471 / A3(2) / M145)</name>
    <dbReference type="NCBI Taxonomy" id="100226"/>
    <lineage>
        <taxon>Bacteria</taxon>
        <taxon>Bacillati</taxon>
        <taxon>Actinomycetota</taxon>
        <taxon>Actinomycetes</taxon>
        <taxon>Kitasatosporales</taxon>
        <taxon>Streptomycetaceae</taxon>
        <taxon>Streptomyces</taxon>
        <taxon>Streptomyces albidoflavus group</taxon>
    </lineage>
</organism>
<comment type="similarity">
    <text evidence="1">Belongs to the bacterial ribosomal protein bL36 family.</text>
</comment>
<accession>Q93JH3</accession>
<name>RL362_STRCO</name>
<dbReference type="EMBL" id="AL939106">
    <property type="protein sequence ID" value="CAC44182.1"/>
    <property type="molecule type" value="Genomic_DNA"/>
</dbReference>
<dbReference type="RefSeq" id="NP_624882.1">
    <property type="nucleotide sequence ID" value="NC_003888.3"/>
</dbReference>
<dbReference type="SMR" id="Q93JH3"/>
<dbReference type="STRING" id="100226.gene:17758152"/>
<dbReference type="PaxDb" id="100226-SCO0569"/>
<dbReference type="KEGG" id="sco:SCO0569"/>
<dbReference type="PATRIC" id="fig|100226.15.peg.550"/>
<dbReference type="eggNOG" id="COG0257">
    <property type="taxonomic scope" value="Bacteria"/>
</dbReference>
<dbReference type="HOGENOM" id="CLU_135723_3_1_11"/>
<dbReference type="InParanoid" id="Q93JH3"/>
<dbReference type="OrthoDB" id="9801558at2"/>
<dbReference type="PhylomeDB" id="Q93JH3"/>
<dbReference type="Proteomes" id="UP000001973">
    <property type="component" value="Chromosome"/>
</dbReference>
<dbReference type="GO" id="GO:1990904">
    <property type="term" value="C:ribonucleoprotein complex"/>
    <property type="evidence" value="ECO:0007669"/>
    <property type="project" value="UniProtKB-KW"/>
</dbReference>
<dbReference type="GO" id="GO:0005840">
    <property type="term" value="C:ribosome"/>
    <property type="evidence" value="ECO:0007669"/>
    <property type="project" value="UniProtKB-KW"/>
</dbReference>
<dbReference type="GO" id="GO:0003735">
    <property type="term" value="F:structural constituent of ribosome"/>
    <property type="evidence" value="ECO:0007669"/>
    <property type="project" value="InterPro"/>
</dbReference>
<dbReference type="GO" id="GO:0006412">
    <property type="term" value="P:translation"/>
    <property type="evidence" value="ECO:0007669"/>
    <property type="project" value="UniProtKB-UniRule"/>
</dbReference>
<dbReference type="HAMAP" id="MF_00251">
    <property type="entry name" value="Ribosomal_bL36"/>
    <property type="match status" value="1"/>
</dbReference>
<dbReference type="InterPro" id="IPR000473">
    <property type="entry name" value="Ribosomal_bL36"/>
</dbReference>
<dbReference type="InterPro" id="IPR035977">
    <property type="entry name" value="Ribosomal_bL36_sp"/>
</dbReference>
<dbReference type="InterPro" id="IPR047621">
    <property type="entry name" value="Ribosomal_L36_bact"/>
</dbReference>
<dbReference type="NCBIfam" id="NF002021">
    <property type="entry name" value="PRK00831.1"/>
    <property type="match status" value="1"/>
</dbReference>
<dbReference type="PANTHER" id="PTHR47781">
    <property type="entry name" value="50S RIBOSOMAL PROTEIN L36 2"/>
    <property type="match status" value="1"/>
</dbReference>
<dbReference type="PANTHER" id="PTHR47781:SF1">
    <property type="entry name" value="LARGE RIBOSOMAL SUBUNIT PROTEIN BL36B"/>
    <property type="match status" value="1"/>
</dbReference>
<dbReference type="Pfam" id="PF00444">
    <property type="entry name" value="Ribosomal_L36"/>
    <property type="match status" value="1"/>
</dbReference>
<dbReference type="SUPFAM" id="SSF57840">
    <property type="entry name" value="Ribosomal protein L36"/>
    <property type="match status" value="1"/>
</dbReference>
<keyword id="KW-1185">Reference proteome</keyword>
<keyword id="KW-0687">Ribonucleoprotein</keyword>
<keyword id="KW-0689">Ribosomal protein</keyword>
<sequence length="40" mass="4623">MKVRNSLRALKARPGAQVVRRRGVTYVINKKDPRFKARQG</sequence>